<organism>
    <name type="scientific">Mus musculus</name>
    <name type="common">Mouse</name>
    <dbReference type="NCBI Taxonomy" id="10090"/>
    <lineage>
        <taxon>Eukaryota</taxon>
        <taxon>Metazoa</taxon>
        <taxon>Chordata</taxon>
        <taxon>Craniata</taxon>
        <taxon>Vertebrata</taxon>
        <taxon>Euteleostomi</taxon>
        <taxon>Mammalia</taxon>
        <taxon>Eutheria</taxon>
        <taxon>Euarchontoglires</taxon>
        <taxon>Glires</taxon>
        <taxon>Rodentia</taxon>
        <taxon>Myomorpha</taxon>
        <taxon>Muroidea</taxon>
        <taxon>Muridae</taxon>
        <taxon>Murinae</taxon>
        <taxon>Mus</taxon>
        <taxon>Mus</taxon>
    </lineage>
</organism>
<sequence length="353" mass="39820">MDEAETDATENKRASEAKRASAMPPPPPPPPPISPPALIPAPAAGEEGPASLGQAGAAGCSRSRPPALEPERSLGRLRGRFEDYDEELEEEEEMEEEEEEEEEMSHFSLRLESGRADSEDEEERLINLVELTPYILCSICKGYLIDATTITECLHTFCKSCIVRHFYYSNRCPKCNIVVHQTQPLYNIRLDRQLQDIVYKLVINLEEREKKQMHDFYKERGLEVPKPAAPQPVPSSKGKTKKVLESVFRIPPELDMSLLLEFIGANEDTGHFKPLEKKFVRVSGEATIGHVEKFLRRKMGLDPACQVDIICGDHLLERYQTLREIRRAIGDTAMQDGLLVLHYGLVVSPLKIT</sequence>
<name>PCGF6_MOUSE</name>
<gene>
    <name type="primary">Pcgf6</name>
    <name type="synonym">Mblr</name>
    <name type="synonym">Rnf134</name>
</gene>
<evidence type="ECO:0000250" key="1">
    <source>
        <dbReference type="UniProtKB" id="Q9BYE7"/>
    </source>
</evidence>
<evidence type="ECO:0000255" key="2"/>
<evidence type="ECO:0000255" key="3">
    <source>
        <dbReference type="PROSITE-ProRule" id="PRU00175"/>
    </source>
</evidence>
<evidence type="ECO:0000256" key="4">
    <source>
        <dbReference type="SAM" id="MobiDB-lite"/>
    </source>
</evidence>
<evidence type="ECO:0000269" key="5">
    <source>
    </source>
</evidence>
<evidence type="ECO:0007744" key="6">
    <source>
    </source>
</evidence>
<accession>Q99NA9</accession>
<reference key="1">
    <citation type="journal article" date="2002" name="Genes Cells">
        <title>MBLR, a new RING finger protein resembling mammalian Polycomb gene products, is regulated by cell cycle-dependent phosphorylation.</title>
        <authorList>
            <person name="Akasaka T."/>
            <person name="Takahashi N."/>
            <person name="Suzuki M."/>
            <person name="Koseki H."/>
            <person name="Bodmer R."/>
            <person name="Koga H."/>
        </authorList>
    </citation>
    <scope>NUCLEOTIDE SEQUENCE [MRNA]</scope>
    <scope>TISSUE SPECIFICITY</scope>
    <scope>DEVELOPMENTAL STAGE</scope>
    <source>
        <tissue>Thymus</tissue>
    </source>
</reference>
<reference key="2">
    <citation type="journal article" date="2004" name="Genome Res.">
        <title>The status, quality, and expansion of the NIH full-length cDNA project: the Mammalian Gene Collection (MGC).</title>
        <authorList>
            <consortium name="The MGC Project Team"/>
        </authorList>
    </citation>
    <scope>NUCLEOTIDE SEQUENCE [LARGE SCALE MRNA]</scope>
    <source>
        <strain>C57BL/6J</strain>
        <strain>FVB/N</strain>
        <tissue>Brain</tissue>
        <tissue>Mammary tumor</tissue>
    </source>
</reference>
<reference key="3">
    <citation type="journal article" date="2010" name="Cell">
        <title>A tissue-specific atlas of mouse protein phosphorylation and expression.</title>
        <authorList>
            <person name="Huttlin E.L."/>
            <person name="Jedrychowski M.P."/>
            <person name="Elias J.E."/>
            <person name="Goswami T."/>
            <person name="Rad R."/>
            <person name="Beausoleil S.A."/>
            <person name="Villen J."/>
            <person name="Haas W."/>
            <person name="Sowa M.E."/>
            <person name="Gygi S.P."/>
        </authorList>
    </citation>
    <scope>PHOSPHORYLATION [LARGE SCALE ANALYSIS] AT SER-118</scope>
    <scope>IDENTIFICATION BY MASS SPECTROMETRY [LARGE SCALE ANALYSIS]</scope>
    <source>
        <tissue>Kidney</tissue>
    </source>
</reference>
<feature type="chain" id="PRO_0000055990" description="Polycomb group RING finger protein 6">
    <location>
        <begin position="1"/>
        <end position="353"/>
    </location>
</feature>
<feature type="zinc finger region" description="RING-type" evidence="3">
    <location>
        <begin position="137"/>
        <end position="176"/>
    </location>
</feature>
<feature type="region of interest" description="Disordered" evidence="4">
    <location>
        <begin position="1"/>
        <end position="116"/>
    </location>
</feature>
<feature type="coiled-coil region" evidence="2">
    <location>
        <begin position="71"/>
        <end position="112"/>
    </location>
</feature>
<feature type="compositionally biased region" description="Basic and acidic residues" evidence="4">
    <location>
        <begin position="9"/>
        <end position="19"/>
    </location>
</feature>
<feature type="compositionally biased region" description="Pro residues" evidence="4">
    <location>
        <begin position="23"/>
        <end position="39"/>
    </location>
</feature>
<feature type="compositionally biased region" description="Low complexity" evidence="4">
    <location>
        <begin position="40"/>
        <end position="52"/>
    </location>
</feature>
<feature type="compositionally biased region" description="Basic and acidic residues" evidence="4">
    <location>
        <begin position="69"/>
        <end position="82"/>
    </location>
</feature>
<feature type="compositionally biased region" description="Acidic residues" evidence="4">
    <location>
        <begin position="83"/>
        <end position="103"/>
    </location>
</feature>
<feature type="modified residue" description="Phosphoserine" evidence="1">
    <location>
        <position position="34"/>
    </location>
</feature>
<feature type="modified residue" description="Phosphoserine" evidence="6">
    <location>
        <position position="118"/>
    </location>
</feature>
<feature type="cross-link" description="Glycyl lysine isopeptide (Lys-Gly) (interchain with G-Cter in SUMO2)" evidence="1">
    <location>
        <position position="226"/>
    </location>
</feature>
<feature type="cross-link" description="Glycyl lysine isopeptide (Lys-Gly) (interchain with G-Cter in SUMO2)" evidence="1">
    <location>
        <position position="237"/>
    </location>
</feature>
<keyword id="KW-0175">Coiled coil</keyword>
<keyword id="KW-1017">Isopeptide bond</keyword>
<keyword id="KW-0479">Metal-binding</keyword>
<keyword id="KW-0539">Nucleus</keyword>
<keyword id="KW-0597">Phosphoprotein</keyword>
<keyword id="KW-1185">Reference proteome</keyword>
<keyword id="KW-0678">Repressor</keyword>
<keyword id="KW-0804">Transcription</keyword>
<keyword id="KW-0805">Transcription regulation</keyword>
<keyword id="KW-0832">Ubl conjugation</keyword>
<keyword id="KW-0862">Zinc</keyword>
<keyword id="KW-0863">Zinc-finger</keyword>
<proteinExistence type="evidence at protein level"/>
<dbReference type="EMBL" id="AB047007">
    <property type="protein sequence ID" value="BAB40780.1"/>
    <property type="molecule type" value="mRNA"/>
</dbReference>
<dbReference type="EMBL" id="BC016195">
    <property type="protein sequence ID" value="AAH16195.1"/>
    <property type="molecule type" value="mRNA"/>
</dbReference>
<dbReference type="EMBL" id="BC089460">
    <property type="protein sequence ID" value="AAH89460.1"/>
    <property type="molecule type" value="mRNA"/>
</dbReference>
<dbReference type="CCDS" id="CCDS29885.1"/>
<dbReference type="RefSeq" id="NP_081930.1">
    <property type="nucleotide sequence ID" value="NM_027654.3"/>
</dbReference>
<dbReference type="BMRB" id="Q99NA9"/>
<dbReference type="SMR" id="Q99NA9"/>
<dbReference type="BioGRID" id="214431">
    <property type="interactions" value="10"/>
</dbReference>
<dbReference type="FunCoup" id="Q99NA9">
    <property type="interactions" value="1781"/>
</dbReference>
<dbReference type="IntAct" id="Q99NA9">
    <property type="interactions" value="6"/>
</dbReference>
<dbReference type="MINT" id="Q99NA9"/>
<dbReference type="STRING" id="10090.ENSMUSP00000026032"/>
<dbReference type="iPTMnet" id="Q99NA9"/>
<dbReference type="PhosphoSitePlus" id="Q99NA9"/>
<dbReference type="PaxDb" id="10090-ENSMUSP00000026032"/>
<dbReference type="PeptideAtlas" id="Q99NA9"/>
<dbReference type="ProteomicsDB" id="288069"/>
<dbReference type="Pumba" id="Q99NA9"/>
<dbReference type="Antibodypedia" id="31521">
    <property type="antibodies" value="158 antibodies from 22 providers"/>
</dbReference>
<dbReference type="DNASU" id="71041"/>
<dbReference type="Ensembl" id="ENSMUST00000026032.7">
    <property type="protein sequence ID" value="ENSMUSP00000026032.6"/>
    <property type="gene ID" value="ENSMUSG00000025050.9"/>
</dbReference>
<dbReference type="GeneID" id="71041"/>
<dbReference type="KEGG" id="mmu:71041"/>
<dbReference type="UCSC" id="uc008hul.1">
    <property type="organism name" value="mouse"/>
</dbReference>
<dbReference type="AGR" id="MGI:1918291"/>
<dbReference type="CTD" id="84108"/>
<dbReference type="MGI" id="MGI:1918291">
    <property type="gene designation" value="Pcgf6"/>
</dbReference>
<dbReference type="VEuPathDB" id="HostDB:ENSMUSG00000025050"/>
<dbReference type="eggNOG" id="KOG2660">
    <property type="taxonomic scope" value="Eukaryota"/>
</dbReference>
<dbReference type="GeneTree" id="ENSGT00940000158034"/>
<dbReference type="HOGENOM" id="CLU_046427_4_0_1"/>
<dbReference type="InParanoid" id="Q99NA9"/>
<dbReference type="OMA" id="YIMCSIC"/>
<dbReference type="OrthoDB" id="1305878at2759"/>
<dbReference type="PhylomeDB" id="Q99NA9"/>
<dbReference type="TreeFam" id="TF324206"/>
<dbReference type="Reactome" id="R-MMU-8953750">
    <property type="pathway name" value="Transcriptional Regulation by E2F6"/>
</dbReference>
<dbReference type="BioGRID-ORCS" id="71041">
    <property type="hits" value="3 hits in 83 CRISPR screens"/>
</dbReference>
<dbReference type="ChiTaRS" id="Pcgf6">
    <property type="organism name" value="mouse"/>
</dbReference>
<dbReference type="PRO" id="PR:Q99NA9"/>
<dbReference type="Proteomes" id="UP000000589">
    <property type="component" value="Chromosome 19"/>
</dbReference>
<dbReference type="RNAct" id="Q99NA9">
    <property type="molecule type" value="protein"/>
</dbReference>
<dbReference type="Bgee" id="ENSMUSG00000025050">
    <property type="expression patterns" value="Expressed in animal zygote and 255 other cell types or tissues"/>
</dbReference>
<dbReference type="ExpressionAtlas" id="Q99NA9">
    <property type="expression patterns" value="baseline and differential"/>
</dbReference>
<dbReference type="GO" id="GO:0005634">
    <property type="term" value="C:nucleus"/>
    <property type="evidence" value="ECO:0000314"/>
    <property type="project" value="UniProtKB"/>
</dbReference>
<dbReference type="GO" id="GO:0031519">
    <property type="term" value="C:PcG protein complex"/>
    <property type="evidence" value="ECO:0000314"/>
    <property type="project" value="UniProtKB"/>
</dbReference>
<dbReference type="GO" id="GO:0035102">
    <property type="term" value="C:PRC1 complex"/>
    <property type="evidence" value="ECO:0000250"/>
    <property type="project" value="UniProtKB"/>
</dbReference>
<dbReference type="GO" id="GO:0019904">
    <property type="term" value="F:protein domain specific binding"/>
    <property type="evidence" value="ECO:0000266"/>
    <property type="project" value="MGI"/>
</dbReference>
<dbReference type="GO" id="GO:0008270">
    <property type="term" value="F:zinc ion binding"/>
    <property type="evidence" value="ECO:0007669"/>
    <property type="project" value="UniProtKB-KW"/>
</dbReference>
<dbReference type="GO" id="GO:0006338">
    <property type="term" value="P:chromatin remodeling"/>
    <property type="evidence" value="ECO:0000250"/>
    <property type="project" value="UniProtKB"/>
</dbReference>
<dbReference type="GO" id="GO:0000122">
    <property type="term" value="P:negative regulation of transcription by RNA polymerase II"/>
    <property type="evidence" value="ECO:0000314"/>
    <property type="project" value="NTNU_SB"/>
</dbReference>
<dbReference type="CDD" id="cd17085">
    <property type="entry name" value="RAWUL_PCGF6"/>
    <property type="match status" value="1"/>
</dbReference>
<dbReference type="CDD" id="cd16737">
    <property type="entry name" value="RING-HC_PCGF5"/>
    <property type="match status" value="1"/>
</dbReference>
<dbReference type="FunFam" id="3.30.40.10:FF:000033">
    <property type="entry name" value="Polycomb group RING finger protein 3"/>
    <property type="match status" value="1"/>
</dbReference>
<dbReference type="FunFam" id="3.10.20.90:FF:000193">
    <property type="entry name" value="Polycomb group RING finger protein 6"/>
    <property type="match status" value="1"/>
</dbReference>
<dbReference type="Gene3D" id="3.10.20.90">
    <property type="entry name" value="Phosphatidylinositol 3-kinase Catalytic Subunit, Chain A, domain 1"/>
    <property type="match status" value="1"/>
</dbReference>
<dbReference type="Gene3D" id="3.30.40.10">
    <property type="entry name" value="Zinc/RING finger domain, C3HC4 (zinc finger)"/>
    <property type="match status" value="1"/>
</dbReference>
<dbReference type="InterPro" id="IPR051507">
    <property type="entry name" value="PcG_RING_finger"/>
</dbReference>
<dbReference type="InterPro" id="IPR046979">
    <property type="entry name" value="PCGF6_RAWUL"/>
</dbReference>
<dbReference type="InterPro" id="IPR032443">
    <property type="entry name" value="RAWUL"/>
</dbReference>
<dbReference type="InterPro" id="IPR029071">
    <property type="entry name" value="Ubiquitin-like_domsf"/>
</dbReference>
<dbReference type="InterPro" id="IPR001841">
    <property type="entry name" value="Znf_RING"/>
</dbReference>
<dbReference type="InterPro" id="IPR013083">
    <property type="entry name" value="Znf_RING/FYVE/PHD"/>
</dbReference>
<dbReference type="InterPro" id="IPR017907">
    <property type="entry name" value="Znf_RING_CS"/>
</dbReference>
<dbReference type="PANTHER" id="PTHR45893">
    <property type="entry name" value="POLYCOMB GROUP RING FINGER PROTEIN"/>
    <property type="match status" value="1"/>
</dbReference>
<dbReference type="Pfam" id="PF16207">
    <property type="entry name" value="RAWUL"/>
    <property type="match status" value="1"/>
</dbReference>
<dbReference type="Pfam" id="PF13923">
    <property type="entry name" value="zf-C3HC4_2"/>
    <property type="match status" value="1"/>
</dbReference>
<dbReference type="SMART" id="SM00184">
    <property type="entry name" value="RING"/>
    <property type="match status" value="1"/>
</dbReference>
<dbReference type="SUPFAM" id="SSF57850">
    <property type="entry name" value="RING/U-box"/>
    <property type="match status" value="1"/>
</dbReference>
<dbReference type="SUPFAM" id="SSF54236">
    <property type="entry name" value="Ubiquitin-like"/>
    <property type="match status" value="1"/>
</dbReference>
<dbReference type="PROSITE" id="PS00518">
    <property type="entry name" value="ZF_RING_1"/>
    <property type="match status" value="1"/>
</dbReference>
<dbReference type="PROSITE" id="PS50089">
    <property type="entry name" value="ZF_RING_2"/>
    <property type="match status" value="1"/>
</dbReference>
<comment type="function">
    <text evidence="1">Transcriptional repressor. May modulate the levels of histone H3K4Me3 by activating KDM5D histone demethylase. Component of a Polycomb group (PcG) multiprotein PRC1-like complex, a complex class required to maintain the transcriptionally repressive state of many genes, including Hox genes, throughout development. PcG PRC1 complex acts via chromatin remodeling and modification of histones; it mediates monoubiquitination of histone H2A 'Lys-119', rendering chromatin heritably changed in its expressibility. Within the PRC1-like complex, regulates RNF2 ubiquitin ligase activity.</text>
</comment>
<comment type="subunit">
    <text evidence="1">Component of a PRC1-like complex. Interacts with BMI1/PCGF4, RING1 and RNF2. Interacts with KDM5D. Interacts with CBX4, CBX6, CBX7 and CBX8.</text>
</comment>
<comment type="subcellular location">
    <subcellularLocation>
        <location evidence="1">Nucleus</location>
    </subcellularLocation>
</comment>
<comment type="tissue specificity">
    <text evidence="5">Expressed in ovary, testis, stomach, liver, thymus and kidney (at protein level).</text>
</comment>
<comment type="developmental stage">
    <text evidence="5">Expressed in embryo at 10.5 dpc.</text>
</comment>
<comment type="PTM">
    <text evidence="1">Phosphorylated during mitosis.</text>
</comment>
<protein>
    <recommendedName>
        <fullName>Polycomb group RING finger protein 6</fullName>
    </recommendedName>
    <alternativeName>
        <fullName>Mel18 and Bmi1-like RING finger</fullName>
    </alternativeName>
    <alternativeName>
        <fullName>RING finger protein 134</fullName>
    </alternativeName>
</protein>